<accession>P14140</accession>
<name>TBB_PLAFA</name>
<evidence type="ECO:0000250" key="1">
    <source>
        <dbReference type="UniProtKB" id="P68363"/>
    </source>
</evidence>
<evidence type="ECO:0000250" key="2">
    <source>
        <dbReference type="UniProtKB" id="Q13509"/>
    </source>
</evidence>
<evidence type="ECO:0000250" key="3">
    <source>
        <dbReference type="UniProtKB" id="Q7KQL5"/>
    </source>
</evidence>
<evidence type="ECO:0000256" key="4">
    <source>
        <dbReference type="SAM" id="MobiDB-lite"/>
    </source>
</evidence>
<evidence type="ECO:0000305" key="5"/>
<comment type="function">
    <text>Tubulin is the major constituent of microtubules, a cylinder consisting of laterally associated linear protofilaments composed of alpha- and beta-tubulin heterodimers. Microtubules grow by the addition of GTP-tubulin dimers to the microtubule end, where a stabilizing cap forms. Below the cap, tubulin dimers are in GDP-bound state, owing to GTPase activity of alpha-tubulin.</text>
</comment>
<comment type="cofactor">
    <cofactor evidence="1">
        <name>Mg(2+)</name>
        <dbReference type="ChEBI" id="CHEBI:18420"/>
    </cofactor>
</comment>
<comment type="subunit">
    <text evidence="3 5">Dimer of alpha and beta chains (By similarity). A typical microtubule is a hollow water-filled tube with an outer diameter of 25 nm and an inner diameter of 15 nM. Alpha-beta heterodimers associate head-to-tail to form protofilaments running lengthwise along the microtubule wall with the beta-tubulin subunit facing the microtubule plus end conferring a structural polarity. Microtubules usually have 13 protofilaments but different protofilament numbers can be found in some organisms and specialized cells (Probable). Interacts with DCX/apicortin; the interaction stabilizes microtubule assembly (By similarity).</text>
</comment>
<comment type="subcellular location">
    <subcellularLocation>
        <location evidence="3">Cytoplasm</location>
        <location evidence="3">Cytoskeleton</location>
    </subcellularLocation>
    <text evidence="3">Localizes to the parasite surface in subpellicular regions in trophozoites and schizonts (By similarity). In merozoites, localize to the apical end of the parasite (By similarity).</text>
</comment>
<comment type="similarity">
    <text evidence="5">Belongs to the tubulin family.</text>
</comment>
<dbReference type="EMBL" id="M28398">
    <property type="protein sequence ID" value="AAA29780.1"/>
    <property type="molecule type" value="Genomic_DNA"/>
</dbReference>
<dbReference type="PIR" id="A44949">
    <property type="entry name" value="A44949"/>
</dbReference>
<dbReference type="SMR" id="P14140"/>
<dbReference type="VEuPathDB" id="PlasmoDB:PF3D7_1008700"/>
<dbReference type="VEuPathDB" id="PlasmoDB:Pf7G8-2_000294400"/>
<dbReference type="VEuPathDB" id="PlasmoDB:Pf7G8_100013100"/>
<dbReference type="VEuPathDB" id="PlasmoDB:PfCD01_100013900"/>
<dbReference type="VEuPathDB" id="PlasmoDB:PfDd2_100014000"/>
<dbReference type="VEuPathDB" id="PlasmoDB:PfGA01_100014000"/>
<dbReference type="VEuPathDB" id="PlasmoDB:PfGB4_100013700"/>
<dbReference type="VEuPathDB" id="PlasmoDB:PfGN01_100014300"/>
<dbReference type="VEuPathDB" id="PlasmoDB:PfHB3_100013100"/>
<dbReference type="VEuPathDB" id="PlasmoDB:PfIT_100012700"/>
<dbReference type="VEuPathDB" id="PlasmoDB:PfKE01_100014000"/>
<dbReference type="VEuPathDB" id="PlasmoDB:PfKH01_100013300"/>
<dbReference type="VEuPathDB" id="PlasmoDB:PfKH02_100014100"/>
<dbReference type="VEuPathDB" id="PlasmoDB:PfML01_100013000"/>
<dbReference type="VEuPathDB" id="PlasmoDB:PfNF135_100014200"/>
<dbReference type="VEuPathDB" id="PlasmoDB:PfNF166_100013700"/>
<dbReference type="VEuPathDB" id="PlasmoDB:PfNF54_100013900"/>
<dbReference type="VEuPathDB" id="PlasmoDB:PfSD01_100013400"/>
<dbReference type="VEuPathDB" id="PlasmoDB:PfSN01_100014100"/>
<dbReference type="VEuPathDB" id="PlasmoDB:PfTG01_100013900"/>
<dbReference type="GO" id="GO:0005737">
    <property type="term" value="C:cytoplasm"/>
    <property type="evidence" value="ECO:0007669"/>
    <property type="project" value="UniProtKB-KW"/>
</dbReference>
<dbReference type="GO" id="GO:0005874">
    <property type="term" value="C:microtubule"/>
    <property type="evidence" value="ECO:0007669"/>
    <property type="project" value="UniProtKB-KW"/>
</dbReference>
<dbReference type="GO" id="GO:0005525">
    <property type="term" value="F:GTP binding"/>
    <property type="evidence" value="ECO:0007669"/>
    <property type="project" value="UniProtKB-KW"/>
</dbReference>
<dbReference type="GO" id="GO:0003924">
    <property type="term" value="F:GTPase activity"/>
    <property type="evidence" value="ECO:0007669"/>
    <property type="project" value="InterPro"/>
</dbReference>
<dbReference type="GO" id="GO:0046872">
    <property type="term" value="F:metal ion binding"/>
    <property type="evidence" value="ECO:0007669"/>
    <property type="project" value="UniProtKB-KW"/>
</dbReference>
<dbReference type="GO" id="GO:0005200">
    <property type="term" value="F:structural constituent of cytoskeleton"/>
    <property type="evidence" value="ECO:0007669"/>
    <property type="project" value="InterPro"/>
</dbReference>
<dbReference type="GO" id="GO:0007017">
    <property type="term" value="P:microtubule-based process"/>
    <property type="evidence" value="ECO:0007669"/>
    <property type="project" value="InterPro"/>
</dbReference>
<dbReference type="CDD" id="cd02187">
    <property type="entry name" value="beta_tubulin"/>
    <property type="match status" value="1"/>
</dbReference>
<dbReference type="FunFam" id="1.10.287.600:FF:000006">
    <property type="entry name" value="Tubulin beta chain"/>
    <property type="match status" value="1"/>
</dbReference>
<dbReference type="FunFam" id="3.30.1330.20:FF:000002">
    <property type="entry name" value="Tubulin beta chain"/>
    <property type="match status" value="1"/>
</dbReference>
<dbReference type="FunFam" id="3.40.50.1440:FF:000003">
    <property type="entry name" value="Tubulin beta chain"/>
    <property type="match status" value="1"/>
</dbReference>
<dbReference type="Gene3D" id="1.10.287.600">
    <property type="entry name" value="Helix hairpin bin"/>
    <property type="match status" value="1"/>
</dbReference>
<dbReference type="Gene3D" id="3.30.1330.20">
    <property type="entry name" value="Tubulin/FtsZ, C-terminal domain"/>
    <property type="match status" value="1"/>
</dbReference>
<dbReference type="Gene3D" id="3.40.50.1440">
    <property type="entry name" value="Tubulin/FtsZ, GTPase domain"/>
    <property type="match status" value="1"/>
</dbReference>
<dbReference type="InterPro" id="IPR013838">
    <property type="entry name" value="Beta-tubulin_BS"/>
</dbReference>
<dbReference type="InterPro" id="IPR002453">
    <property type="entry name" value="Beta_tubulin"/>
</dbReference>
<dbReference type="InterPro" id="IPR008280">
    <property type="entry name" value="Tub_FtsZ_C"/>
</dbReference>
<dbReference type="InterPro" id="IPR000217">
    <property type="entry name" value="Tubulin"/>
</dbReference>
<dbReference type="InterPro" id="IPR037103">
    <property type="entry name" value="Tubulin/FtsZ-like_C"/>
</dbReference>
<dbReference type="InterPro" id="IPR018316">
    <property type="entry name" value="Tubulin/FtsZ_2-layer-sand-dom"/>
</dbReference>
<dbReference type="InterPro" id="IPR036525">
    <property type="entry name" value="Tubulin/FtsZ_GTPase_sf"/>
</dbReference>
<dbReference type="InterPro" id="IPR023123">
    <property type="entry name" value="Tubulin_C"/>
</dbReference>
<dbReference type="InterPro" id="IPR017975">
    <property type="entry name" value="Tubulin_CS"/>
</dbReference>
<dbReference type="InterPro" id="IPR003008">
    <property type="entry name" value="Tubulin_FtsZ_GTPase"/>
</dbReference>
<dbReference type="PANTHER" id="PTHR11588">
    <property type="entry name" value="TUBULIN"/>
    <property type="match status" value="1"/>
</dbReference>
<dbReference type="Pfam" id="PF00091">
    <property type="entry name" value="Tubulin"/>
    <property type="match status" value="1"/>
</dbReference>
<dbReference type="Pfam" id="PF03953">
    <property type="entry name" value="Tubulin_C"/>
    <property type="match status" value="1"/>
</dbReference>
<dbReference type="PRINTS" id="PR01163">
    <property type="entry name" value="BETATUBULIN"/>
</dbReference>
<dbReference type="PRINTS" id="PR01161">
    <property type="entry name" value="TUBULIN"/>
</dbReference>
<dbReference type="SMART" id="SM00864">
    <property type="entry name" value="Tubulin"/>
    <property type="match status" value="1"/>
</dbReference>
<dbReference type="SMART" id="SM00865">
    <property type="entry name" value="Tubulin_C"/>
    <property type="match status" value="1"/>
</dbReference>
<dbReference type="SUPFAM" id="SSF55307">
    <property type="entry name" value="Tubulin C-terminal domain-like"/>
    <property type="match status" value="1"/>
</dbReference>
<dbReference type="SUPFAM" id="SSF52490">
    <property type="entry name" value="Tubulin nucleotide-binding domain-like"/>
    <property type="match status" value="1"/>
</dbReference>
<dbReference type="PROSITE" id="PS00227">
    <property type="entry name" value="TUBULIN"/>
    <property type="match status" value="1"/>
</dbReference>
<dbReference type="PROSITE" id="PS00228">
    <property type="entry name" value="TUBULIN_B_AUTOREG"/>
    <property type="match status" value="1"/>
</dbReference>
<sequence length="445" mass="49814">MREIVHIQAGQCGNQIGAKFWEVISDEHGIDPSGTYSGDSDLQLERVDVFYNEATGGRYVPRAILMDLEPGTMDSVRAGPFGQLFRPDNFVFGQTGAGNNWAKGHYTEGAELIDAVLDVLRKEAEGCDCLQGFQITHSLGGGTGSGMGTLLISKIREEYPDRIMETFSVFPSPKVSDTVVEPYNATLSVHQLVENADEVQVIDNEALYDICFRTLKLTTPTYGDLNHLVSAAMSGVTCSLRFPGQLNSDLRKLAVNLIPFPRLHFFMYGFAPLTSRGSQQYRALTVPELTQQMFDAKNMMCTSDPRHGRYLTACAMFRGRMSTKEVDEQMLNVQNKNSSYFVEWIPHNTKSSVCDIPPLGLKMAVTFVGNSTAIQEMFKRVSDQFTAMFRRKAFLHWYTGEGMDEMEFTEAESNMNDLVSEYQQYQDATAEEEGEFEEEEGDVEA</sequence>
<feature type="chain" id="PRO_0000048311" description="Tubulin beta chain">
    <location>
        <begin position="1"/>
        <end position="445"/>
    </location>
</feature>
<feature type="region of interest" description="Disordered" evidence="4">
    <location>
        <begin position="426"/>
        <end position="445"/>
    </location>
</feature>
<feature type="compositionally biased region" description="Acidic residues" evidence="4">
    <location>
        <begin position="429"/>
        <end position="445"/>
    </location>
</feature>
<feature type="binding site" evidence="2">
    <location>
        <position position="11"/>
    </location>
    <ligand>
        <name>GTP</name>
        <dbReference type="ChEBI" id="CHEBI:37565"/>
    </ligand>
</feature>
<feature type="binding site" evidence="1">
    <location>
        <position position="69"/>
    </location>
    <ligand>
        <name>GTP</name>
        <dbReference type="ChEBI" id="CHEBI:37565"/>
    </ligand>
</feature>
<feature type="binding site" evidence="1">
    <location>
        <position position="69"/>
    </location>
    <ligand>
        <name>Mg(2+)</name>
        <dbReference type="ChEBI" id="CHEBI:18420"/>
    </ligand>
</feature>
<feature type="binding site" evidence="2">
    <location>
        <position position="138"/>
    </location>
    <ligand>
        <name>GTP</name>
        <dbReference type="ChEBI" id="CHEBI:37565"/>
    </ligand>
</feature>
<feature type="binding site" evidence="2">
    <location>
        <position position="142"/>
    </location>
    <ligand>
        <name>GTP</name>
        <dbReference type="ChEBI" id="CHEBI:37565"/>
    </ligand>
</feature>
<feature type="binding site" evidence="2">
    <location>
        <position position="143"/>
    </location>
    <ligand>
        <name>GTP</name>
        <dbReference type="ChEBI" id="CHEBI:37565"/>
    </ligand>
</feature>
<feature type="binding site" evidence="2">
    <location>
        <position position="144"/>
    </location>
    <ligand>
        <name>GTP</name>
        <dbReference type="ChEBI" id="CHEBI:37565"/>
    </ligand>
</feature>
<feature type="binding site" evidence="2">
    <location>
        <position position="204"/>
    </location>
    <ligand>
        <name>GTP</name>
        <dbReference type="ChEBI" id="CHEBI:37565"/>
    </ligand>
</feature>
<feature type="binding site" evidence="2">
    <location>
        <position position="226"/>
    </location>
    <ligand>
        <name>GTP</name>
        <dbReference type="ChEBI" id="CHEBI:37565"/>
    </ligand>
</feature>
<proteinExistence type="inferred from homology"/>
<reference key="1">
    <citation type="journal article" date="1990" name="Mol. Biochem. Parasitol.">
        <title>Isolation of alpha- and beta-tubulin genes of Plasmodium falciparum using a single oligonucleotide probe.</title>
        <authorList>
            <person name="Sen K."/>
            <person name="Godson G.N."/>
        </authorList>
    </citation>
    <scope>NUCLEOTIDE SEQUENCE [GENOMIC DNA]</scope>
</reference>
<protein>
    <recommendedName>
        <fullName>Tubulin beta chain</fullName>
    </recommendedName>
    <alternativeName>
        <fullName>Beta-tubulin</fullName>
    </alternativeName>
</protein>
<organism>
    <name type="scientific">Plasmodium falciparum</name>
    <dbReference type="NCBI Taxonomy" id="5833"/>
    <lineage>
        <taxon>Eukaryota</taxon>
        <taxon>Sar</taxon>
        <taxon>Alveolata</taxon>
        <taxon>Apicomplexa</taxon>
        <taxon>Aconoidasida</taxon>
        <taxon>Haemosporida</taxon>
        <taxon>Plasmodiidae</taxon>
        <taxon>Plasmodium</taxon>
        <taxon>Plasmodium (Laverania)</taxon>
    </lineage>
</organism>
<keyword id="KW-0963">Cytoplasm</keyword>
<keyword id="KW-0206">Cytoskeleton</keyword>
<keyword id="KW-0342">GTP-binding</keyword>
<keyword id="KW-0460">Magnesium</keyword>
<keyword id="KW-0479">Metal-binding</keyword>
<keyword id="KW-0493">Microtubule</keyword>
<keyword id="KW-0547">Nucleotide-binding</keyword>